<gene>
    <name evidence="1" type="primary">pnp</name>
    <name type="ordered locus">lwe1346</name>
</gene>
<name>PNP_LISW6</name>
<dbReference type="EC" id="2.7.7.8" evidence="1"/>
<dbReference type="EMBL" id="AM263198">
    <property type="protein sequence ID" value="CAK20764.1"/>
    <property type="molecule type" value="Genomic_DNA"/>
</dbReference>
<dbReference type="RefSeq" id="WP_011702147.1">
    <property type="nucleotide sequence ID" value="NC_008555.1"/>
</dbReference>
<dbReference type="SMR" id="A0AID2"/>
<dbReference type="STRING" id="386043.lwe1346"/>
<dbReference type="GeneID" id="61189223"/>
<dbReference type="KEGG" id="lwe:lwe1346"/>
<dbReference type="eggNOG" id="COG1185">
    <property type="taxonomic scope" value="Bacteria"/>
</dbReference>
<dbReference type="HOGENOM" id="CLU_004217_2_2_9"/>
<dbReference type="OrthoDB" id="9804305at2"/>
<dbReference type="Proteomes" id="UP000000779">
    <property type="component" value="Chromosome"/>
</dbReference>
<dbReference type="GO" id="GO:0005829">
    <property type="term" value="C:cytosol"/>
    <property type="evidence" value="ECO:0007669"/>
    <property type="project" value="TreeGrafter"/>
</dbReference>
<dbReference type="GO" id="GO:0000175">
    <property type="term" value="F:3'-5'-RNA exonuclease activity"/>
    <property type="evidence" value="ECO:0007669"/>
    <property type="project" value="TreeGrafter"/>
</dbReference>
<dbReference type="GO" id="GO:0000287">
    <property type="term" value="F:magnesium ion binding"/>
    <property type="evidence" value="ECO:0007669"/>
    <property type="project" value="UniProtKB-UniRule"/>
</dbReference>
<dbReference type="GO" id="GO:0004654">
    <property type="term" value="F:polyribonucleotide nucleotidyltransferase activity"/>
    <property type="evidence" value="ECO:0007669"/>
    <property type="project" value="UniProtKB-UniRule"/>
</dbReference>
<dbReference type="GO" id="GO:0003723">
    <property type="term" value="F:RNA binding"/>
    <property type="evidence" value="ECO:0007669"/>
    <property type="project" value="UniProtKB-UniRule"/>
</dbReference>
<dbReference type="GO" id="GO:0006402">
    <property type="term" value="P:mRNA catabolic process"/>
    <property type="evidence" value="ECO:0007669"/>
    <property type="project" value="UniProtKB-UniRule"/>
</dbReference>
<dbReference type="GO" id="GO:0006396">
    <property type="term" value="P:RNA processing"/>
    <property type="evidence" value="ECO:0007669"/>
    <property type="project" value="InterPro"/>
</dbReference>
<dbReference type="CDD" id="cd02393">
    <property type="entry name" value="KH-I_PNPase"/>
    <property type="match status" value="1"/>
</dbReference>
<dbReference type="CDD" id="cd11363">
    <property type="entry name" value="RNase_PH_PNPase_1"/>
    <property type="match status" value="1"/>
</dbReference>
<dbReference type="CDD" id="cd11364">
    <property type="entry name" value="RNase_PH_PNPase_2"/>
    <property type="match status" value="1"/>
</dbReference>
<dbReference type="CDD" id="cd04472">
    <property type="entry name" value="S1_PNPase"/>
    <property type="match status" value="1"/>
</dbReference>
<dbReference type="FunFam" id="2.40.50.140:FF:000023">
    <property type="entry name" value="Polyribonucleotide nucleotidyltransferase"/>
    <property type="match status" value="1"/>
</dbReference>
<dbReference type="FunFam" id="3.30.1370.10:FF:000001">
    <property type="entry name" value="Polyribonucleotide nucleotidyltransferase"/>
    <property type="match status" value="1"/>
</dbReference>
<dbReference type="FunFam" id="3.30.230.70:FF:000001">
    <property type="entry name" value="Polyribonucleotide nucleotidyltransferase"/>
    <property type="match status" value="1"/>
</dbReference>
<dbReference type="FunFam" id="3.30.230.70:FF:000002">
    <property type="entry name" value="Polyribonucleotide nucleotidyltransferase"/>
    <property type="match status" value="1"/>
</dbReference>
<dbReference type="Gene3D" id="3.30.230.70">
    <property type="entry name" value="GHMP Kinase, N-terminal domain"/>
    <property type="match status" value="2"/>
</dbReference>
<dbReference type="Gene3D" id="3.30.1370.10">
    <property type="entry name" value="K Homology domain, type 1"/>
    <property type="match status" value="1"/>
</dbReference>
<dbReference type="Gene3D" id="2.40.50.140">
    <property type="entry name" value="Nucleic acid-binding proteins"/>
    <property type="match status" value="1"/>
</dbReference>
<dbReference type="HAMAP" id="MF_01595">
    <property type="entry name" value="PNPase"/>
    <property type="match status" value="1"/>
</dbReference>
<dbReference type="InterPro" id="IPR001247">
    <property type="entry name" value="ExoRNase_PH_dom1"/>
</dbReference>
<dbReference type="InterPro" id="IPR015847">
    <property type="entry name" value="ExoRNase_PH_dom2"/>
</dbReference>
<dbReference type="InterPro" id="IPR036345">
    <property type="entry name" value="ExoRNase_PH_dom2_sf"/>
</dbReference>
<dbReference type="InterPro" id="IPR004087">
    <property type="entry name" value="KH_dom"/>
</dbReference>
<dbReference type="InterPro" id="IPR004088">
    <property type="entry name" value="KH_dom_type_1"/>
</dbReference>
<dbReference type="InterPro" id="IPR036612">
    <property type="entry name" value="KH_dom_type_1_sf"/>
</dbReference>
<dbReference type="InterPro" id="IPR012340">
    <property type="entry name" value="NA-bd_OB-fold"/>
</dbReference>
<dbReference type="InterPro" id="IPR012162">
    <property type="entry name" value="PNPase"/>
</dbReference>
<dbReference type="InterPro" id="IPR027408">
    <property type="entry name" value="PNPase/RNase_PH_dom_sf"/>
</dbReference>
<dbReference type="InterPro" id="IPR015848">
    <property type="entry name" value="PNPase_PH_RNA-bd_bac/org-type"/>
</dbReference>
<dbReference type="InterPro" id="IPR036456">
    <property type="entry name" value="PNPase_PH_RNA-bd_sf"/>
</dbReference>
<dbReference type="InterPro" id="IPR020568">
    <property type="entry name" value="Ribosomal_Su5_D2-typ_SF"/>
</dbReference>
<dbReference type="InterPro" id="IPR003029">
    <property type="entry name" value="S1_domain"/>
</dbReference>
<dbReference type="NCBIfam" id="TIGR03591">
    <property type="entry name" value="polynuc_phos"/>
    <property type="match status" value="1"/>
</dbReference>
<dbReference type="NCBIfam" id="NF008805">
    <property type="entry name" value="PRK11824.1"/>
    <property type="match status" value="1"/>
</dbReference>
<dbReference type="PANTHER" id="PTHR11252">
    <property type="entry name" value="POLYRIBONUCLEOTIDE NUCLEOTIDYLTRANSFERASE"/>
    <property type="match status" value="1"/>
</dbReference>
<dbReference type="PANTHER" id="PTHR11252:SF0">
    <property type="entry name" value="POLYRIBONUCLEOTIDE NUCLEOTIDYLTRANSFERASE 1, MITOCHONDRIAL"/>
    <property type="match status" value="1"/>
</dbReference>
<dbReference type="Pfam" id="PF00013">
    <property type="entry name" value="KH_1"/>
    <property type="match status" value="1"/>
</dbReference>
<dbReference type="Pfam" id="PF03726">
    <property type="entry name" value="PNPase"/>
    <property type="match status" value="1"/>
</dbReference>
<dbReference type="Pfam" id="PF01138">
    <property type="entry name" value="RNase_PH"/>
    <property type="match status" value="2"/>
</dbReference>
<dbReference type="Pfam" id="PF03725">
    <property type="entry name" value="RNase_PH_C"/>
    <property type="match status" value="2"/>
</dbReference>
<dbReference type="Pfam" id="PF00575">
    <property type="entry name" value="S1"/>
    <property type="match status" value="1"/>
</dbReference>
<dbReference type="PIRSF" id="PIRSF005499">
    <property type="entry name" value="PNPase"/>
    <property type="match status" value="1"/>
</dbReference>
<dbReference type="SMART" id="SM00322">
    <property type="entry name" value="KH"/>
    <property type="match status" value="1"/>
</dbReference>
<dbReference type="SMART" id="SM00316">
    <property type="entry name" value="S1"/>
    <property type="match status" value="1"/>
</dbReference>
<dbReference type="SUPFAM" id="SSF54791">
    <property type="entry name" value="Eukaryotic type KH-domain (KH-domain type I)"/>
    <property type="match status" value="1"/>
</dbReference>
<dbReference type="SUPFAM" id="SSF50249">
    <property type="entry name" value="Nucleic acid-binding proteins"/>
    <property type="match status" value="1"/>
</dbReference>
<dbReference type="SUPFAM" id="SSF46915">
    <property type="entry name" value="Polynucleotide phosphorylase/guanosine pentaphosphate synthase (PNPase/GPSI), domain 3"/>
    <property type="match status" value="1"/>
</dbReference>
<dbReference type="SUPFAM" id="SSF55666">
    <property type="entry name" value="Ribonuclease PH domain 2-like"/>
    <property type="match status" value="2"/>
</dbReference>
<dbReference type="SUPFAM" id="SSF54211">
    <property type="entry name" value="Ribosomal protein S5 domain 2-like"/>
    <property type="match status" value="2"/>
</dbReference>
<dbReference type="PROSITE" id="PS50084">
    <property type="entry name" value="KH_TYPE_1"/>
    <property type="match status" value="1"/>
</dbReference>
<dbReference type="PROSITE" id="PS50126">
    <property type="entry name" value="S1"/>
    <property type="match status" value="1"/>
</dbReference>
<reference key="1">
    <citation type="journal article" date="2006" name="J. Bacteriol.">
        <title>Whole-genome sequence of Listeria welshimeri reveals common steps in genome reduction with Listeria innocua as compared to Listeria monocytogenes.</title>
        <authorList>
            <person name="Hain T."/>
            <person name="Steinweg C."/>
            <person name="Kuenne C.T."/>
            <person name="Billion A."/>
            <person name="Ghai R."/>
            <person name="Chatterjee S.S."/>
            <person name="Domann E."/>
            <person name="Kaerst U."/>
            <person name="Goesmann A."/>
            <person name="Bekel T."/>
            <person name="Bartels D."/>
            <person name="Kaiser O."/>
            <person name="Meyer F."/>
            <person name="Puehler A."/>
            <person name="Weisshaar B."/>
            <person name="Wehland J."/>
            <person name="Liang C."/>
            <person name="Dandekar T."/>
            <person name="Lampidis R."/>
            <person name="Kreft J."/>
            <person name="Goebel W."/>
            <person name="Chakraborty T."/>
        </authorList>
    </citation>
    <scope>NUCLEOTIDE SEQUENCE [LARGE SCALE GENOMIC DNA]</scope>
    <source>
        <strain>ATCC 35897 / DSM 20650 / CCUG 15529 / CIP 8149 / NCTC 11857 / SLCC 5334 / V8</strain>
    </source>
</reference>
<keyword id="KW-0963">Cytoplasm</keyword>
<keyword id="KW-0460">Magnesium</keyword>
<keyword id="KW-0479">Metal-binding</keyword>
<keyword id="KW-0548">Nucleotidyltransferase</keyword>
<keyword id="KW-0694">RNA-binding</keyword>
<keyword id="KW-0808">Transferase</keyword>
<comment type="function">
    <text evidence="1">Involved in mRNA degradation. Catalyzes the phosphorolysis of single-stranded polyribonucleotides processively in the 3'- to 5'-direction.</text>
</comment>
<comment type="catalytic activity">
    <reaction evidence="1">
        <text>RNA(n+1) + phosphate = RNA(n) + a ribonucleoside 5'-diphosphate</text>
        <dbReference type="Rhea" id="RHEA:22096"/>
        <dbReference type="Rhea" id="RHEA-COMP:14527"/>
        <dbReference type="Rhea" id="RHEA-COMP:17342"/>
        <dbReference type="ChEBI" id="CHEBI:43474"/>
        <dbReference type="ChEBI" id="CHEBI:57930"/>
        <dbReference type="ChEBI" id="CHEBI:140395"/>
        <dbReference type="EC" id="2.7.7.8"/>
    </reaction>
</comment>
<comment type="cofactor">
    <cofactor evidence="1">
        <name>Mg(2+)</name>
        <dbReference type="ChEBI" id="CHEBI:18420"/>
    </cofactor>
</comment>
<comment type="subcellular location">
    <subcellularLocation>
        <location evidence="1">Cytoplasm</location>
    </subcellularLocation>
</comment>
<comment type="similarity">
    <text evidence="1">Belongs to the polyribonucleotide nucleotidyltransferase family.</text>
</comment>
<accession>A0AID2</accession>
<evidence type="ECO:0000255" key="1">
    <source>
        <dbReference type="HAMAP-Rule" id="MF_01595"/>
    </source>
</evidence>
<evidence type="ECO:0000256" key="2">
    <source>
        <dbReference type="SAM" id="MobiDB-lite"/>
    </source>
</evidence>
<proteinExistence type="inferred from homology"/>
<sequence length="723" mass="79623">MSEKQVFSTEWAGKTLSVEVGQLAKQASGAALIRYGDTVVLTAAVGSKKPRPGDFFPLTVNYEEKMYSVGKVPGGFLKREGRPSDRATLTARLIDRPIRPLFAEGFRNEVQITSTVFSVDQDCSPEMAAMLGSSVALVISDIPFEGPIAGVDVGRIDGKYVINPTIEQAEKSDISLTVAGTYDAINMVEAGAKEVSEEAMLEAIMFGHEEIKRLCEFQQQIIAAVGKEKREIELFVSDPELEAEVKAASEGKMKVAIKTEEKKAREAAIEEVKEEILESYKAKELENETEILSEVAHILEMIEKDEMRRLISQDKIRPDGRKVNEIRPLSSEVGMLPRVHGSGLFTRGQTQALSVCTLAPLREHQIIDGLGTEEYKRFMHHYNFPQFSVGETGPRRAPGRREIGHGALGERALQYVIPSEEDFPYTIRLVSEVLESNGSSSQASICGSTLAMLDAGVPIKAPVAGIAMGLVKLGDDYTILSDIQGMEDHFGDMDFKVAGTKDGITALQMDIKIDGLSRQILDEALTQAKEGRLHILEHLTSTISAPREELSAYAPKIITLNIKPEKIKDVIGPGGKQINAIIEETGVKIDIEQDGTVYIASQDQAMNRKAIAIIEDIVREVEVGEVYTGKVRRIEKFGAFVELFKGTDGLVHISELAHERVGKVEDILKLGDEVTVKVIEVDHQGRVNLSRKALLEKKEQPEGDKKPQAEKKFYPKTKKPESK</sequence>
<protein>
    <recommendedName>
        <fullName evidence="1">Polyribonucleotide nucleotidyltransferase</fullName>
        <ecNumber evidence="1">2.7.7.8</ecNumber>
    </recommendedName>
    <alternativeName>
        <fullName evidence="1">Polynucleotide phosphorylase</fullName>
        <shortName evidence="1">PNPase</shortName>
    </alternativeName>
</protein>
<organism>
    <name type="scientific">Listeria welshimeri serovar 6b (strain ATCC 35897 / DSM 20650 / CCUG 15529 / CIP 8149 / NCTC 11857 / SLCC 5334 / V8)</name>
    <dbReference type="NCBI Taxonomy" id="386043"/>
    <lineage>
        <taxon>Bacteria</taxon>
        <taxon>Bacillati</taxon>
        <taxon>Bacillota</taxon>
        <taxon>Bacilli</taxon>
        <taxon>Bacillales</taxon>
        <taxon>Listeriaceae</taxon>
        <taxon>Listeria</taxon>
    </lineage>
</organism>
<feature type="chain" id="PRO_0000329704" description="Polyribonucleotide nucleotidyltransferase">
    <location>
        <begin position="1"/>
        <end position="723"/>
    </location>
</feature>
<feature type="domain" description="KH" evidence="1">
    <location>
        <begin position="555"/>
        <end position="614"/>
    </location>
</feature>
<feature type="domain" description="S1 motif" evidence="1">
    <location>
        <begin position="624"/>
        <end position="692"/>
    </location>
</feature>
<feature type="region of interest" description="Disordered" evidence="2">
    <location>
        <begin position="692"/>
        <end position="723"/>
    </location>
</feature>
<feature type="compositionally biased region" description="Basic and acidic residues" evidence="2">
    <location>
        <begin position="693"/>
        <end position="723"/>
    </location>
</feature>
<feature type="binding site" evidence="1">
    <location>
        <position position="488"/>
    </location>
    <ligand>
        <name>Mg(2+)</name>
        <dbReference type="ChEBI" id="CHEBI:18420"/>
    </ligand>
</feature>
<feature type="binding site" evidence="1">
    <location>
        <position position="494"/>
    </location>
    <ligand>
        <name>Mg(2+)</name>
        <dbReference type="ChEBI" id="CHEBI:18420"/>
    </ligand>
</feature>